<accession>Q0TPK0</accession>
<protein>
    <recommendedName>
        <fullName evidence="1">Glycerol-3-phosphate dehydrogenase [NAD(P)+]</fullName>
        <ecNumber evidence="1">1.1.1.94</ecNumber>
    </recommendedName>
    <alternativeName>
        <fullName evidence="1">NAD(P)(+)-dependent glycerol-3-phosphate dehydrogenase</fullName>
    </alternativeName>
    <alternativeName>
        <fullName evidence="1">NAD(P)H-dependent dihydroxyacetone-phosphate reductase</fullName>
    </alternativeName>
</protein>
<gene>
    <name evidence="1" type="primary">gpsA</name>
    <name type="ordered locus">CPF_2007</name>
</gene>
<sequence>MSKVAFLGAGSFGTSLGILLGNKGVTVSLWDRDENVINDINVNRKNDKYIKDLTIPTNVTAYKDLDEALNGAEYVVLAVPSHVIRTACKNLKGKINDDVIIINIAKGIEEGTNLRLSQVINQELPNNKVVVLSGPSHAEEVSKGIPTTLVASSECMECAEKVQDLFMDKNFRIYTNDDIIGVEIGGAVKNIIALAAGVCDGIGYGDNSKAALMTRGMAEIARIGIKMGGKAETFFGLTGMGDLIVTCTSMHSRNRRAGILIGQGKTAEEAIEEVGMVVEGIKACKAFYELKEKEGVTMPITDIAYKVLFEGAKAENAVSLLMERDKKKEEI</sequence>
<reference key="1">
    <citation type="journal article" date="2006" name="Genome Res.">
        <title>Skewed genomic variability in strains of the toxigenic bacterial pathogen, Clostridium perfringens.</title>
        <authorList>
            <person name="Myers G.S.A."/>
            <person name="Rasko D.A."/>
            <person name="Cheung J.K."/>
            <person name="Ravel J."/>
            <person name="Seshadri R."/>
            <person name="DeBoy R.T."/>
            <person name="Ren Q."/>
            <person name="Varga J."/>
            <person name="Awad M.M."/>
            <person name="Brinkac L.M."/>
            <person name="Daugherty S.C."/>
            <person name="Haft D.H."/>
            <person name="Dodson R.J."/>
            <person name="Madupu R."/>
            <person name="Nelson W.C."/>
            <person name="Rosovitz M.J."/>
            <person name="Sullivan S.A."/>
            <person name="Khouri H."/>
            <person name="Dimitrov G.I."/>
            <person name="Watkins K.L."/>
            <person name="Mulligan S."/>
            <person name="Benton J."/>
            <person name="Radune D."/>
            <person name="Fisher D.J."/>
            <person name="Atkins H.S."/>
            <person name="Hiscox T."/>
            <person name="Jost B.H."/>
            <person name="Billington S.J."/>
            <person name="Songer J.G."/>
            <person name="McClane B.A."/>
            <person name="Titball R.W."/>
            <person name="Rood J.I."/>
            <person name="Melville S.B."/>
            <person name="Paulsen I.T."/>
        </authorList>
    </citation>
    <scope>NUCLEOTIDE SEQUENCE [LARGE SCALE GENOMIC DNA]</scope>
    <source>
        <strain>ATCC 13124 / DSM 756 / JCM 1290 / NCIMB 6125 / NCTC 8237 / S 107 / Type A</strain>
    </source>
</reference>
<evidence type="ECO:0000255" key="1">
    <source>
        <dbReference type="HAMAP-Rule" id="MF_00394"/>
    </source>
</evidence>
<proteinExistence type="inferred from homology"/>
<keyword id="KW-0963">Cytoplasm</keyword>
<keyword id="KW-0444">Lipid biosynthesis</keyword>
<keyword id="KW-0443">Lipid metabolism</keyword>
<keyword id="KW-0520">NAD</keyword>
<keyword id="KW-0521">NADP</keyword>
<keyword id="KW-0547">Nucleotide-binding</keyword>
<keyword id="KW-0560">Oxidoreductase</keyword>
<keyword id="KW-0594">Phospholipid biosynthesis</keyword>
<keyword id="KW-1208">Phospholipid metabolism</keyword>
<feature type="chain" id="PRO_1000049497" description="Glycerol-3-phosphate dehydrogenase [NAD(P)+]">
    <location>
        <begin position="1"/>
        <end position="331"/>
    </location>
</feature>
<feature type="active site" description="Proton acceptor" evidence="1">
    <location>
        <position position="189"/>
    </location>
</feature>
<feature type="binding site" evidence="1">
    <location>
        <position position="11"/>
    </location>
    <ligand>
        <name>NADPH</name>
        <dbReference type="ChEBI" id="CHEBI:57783"/>
    </ligand>
</feature>
<feature type="binding site" evidence="1">
    <location>
        <position position="12"/>
    </location>
    <ligand>
        <name>NADPH</name>
        <dbReference type="ChEBI" id="CHEBI:57783"/>
    </ligand>
</feature>
<feature type="binding site" evidence="1">
    <location>
        <position position="32"/>
    </location>
    <ligand>
        <name>NADPH</name>
        <dbReference type="ChEBI" id="CHEBI:57783"/>
    </ligand>
</feature>
<feature type="binding site" evidence="1">
    <location>
        <position position="106"/>
    </location>
    <ligand>
        <name>NADPH</name>
        <dbReference type="ChEBI" id="CHEBI:57783"/>
    </ligand>
</feature>
<feature type="binding site" evidence="1">
    <location>
        <position position="106"/>
    </location>
    <ligand>
        <name>sn-glycerol 3-phosphate</name>
        <dbReference type="ChEBI" id="CHEBI:57597"/>
    </ligand>
</feature>
<feature type="binding site" evidence="1">
    <location>
        <position position="134"/>
    </location>
    <ligand>
        <name>sn-glycerol 3-phosphate</name>
        <dbReference type="ChEBI" id="CHEBI:57597"/>
    </ligand>
</feature>
<feature type="binding site" evidence="1">
    <location>
        <position position="136"/>
    </location>
    <ligand>
        <name>sn-glycerol 3-phosphate</name>
        <dbReference type="ChEBI" id="CHEBI:57597"/>
    </ligand>
</feature>
<feature type="binding site" evidence="1">
    <location>
        <position position="138"/>
    </location>
    <ligand>
        <name>NADPH</name>
        <dbReference type="ChEBI" id="CHEBI:57783"/>
    </ligand>
</feature>
<feature type="binding site" evidence="1">
    <location>
        <position position="189"/>
    </location>
    <ligand>
        <name>sn-glycerol 3-phosphate</name>
        <dbReference type="ChEBI" id="CHEBI:57597"/>
    </ligand>
</feature>
<feature type="binding site" evidence="1">
    <location>
        <position position="242"/>
    </location>
    <ligand>
        <name>sn-glycerol 3-phosphate</name>
        <dbReference type="ChEBI" id="CHEBI:57597"/>
    </ligand>
</feature>
<feature type="binding site" evidence="1">
    <location>
        <position position="252"/>
    </location>
    <ligand>
        <name>sn-glycerol 3-phosphate</name>
        <dbReference type="ChEBI" id="CHEBI:57597"/>
    </ligand>
</feature>
<feature type="binding site" evidence="1">
    <location>
        <position position="253"/>
    </location>
    <ligand>
        <name>NADPH</name>
        <dbReference type="ChEBI" id="CHEBI:57783"/>
    </ligand>
</feature>
<feature type="binding site" evidence="1">
    <location>
        <position position="253"/>
    </location>
    <ligand>
        <name>sn-glycerol 3-phosphate</name>
        <dbReference type="ChEBI" id="CHEBI:57597"/>
    </ligand>
</feature>
<feature type="binding site" evidence="1">
    <location>
        <position position="254"/>
    </location>
    <ligand>
        <name>sn-glycerol 3-phosphate</name>
        <dbReference type="ChEBI" id="CHEBI:57597"/>
    </ligand>
</feature>
<feature type="binding site" evidence="1">
    <location>
        <position position="277"/>
    </location>
    <ligand>
        <name>NADPH</name>
        <dbReference type="ChEBI" id="CHEBI:57783"/>
    </ligand>
</feature>
<feature type="binding site" evidence="1">
    <location>
        <position position="279"/>
    </location>
    <ligand>
        <name>NADPH</name>
        <dbReference type="ChEBI" id="CHEBI:57783"/>
    </ligand>
</feature>
<dbReference type="EC" id="1.1.1.94" evidence="1"/>
<dbReference type="EMBL" id="CP000246">
    <property type="protein sequence ID" value="ABG82368.1"/>
    <property type="molecule type" value="Genomic_DNA"/>
</dbReference>
<dbReference type="RefSeq" id="WP_003458497.1">
    <property type="nucleotide sequence ID" value="NC_008261.1"/>
</dbReference>
<dbReference type="SMR" id="Q0TPK0"/>
<dbReference type="STRING" id="195103.CPF_2007"/>
<dbReference type="PaxDb" id="195103-CPF_2007"/>
<dbReference type="KEGG" id="cpf:CPF_2007"/>
<dbReference type="eggNOG" id="COG0240">
    <property type="taxonomic scope" value="Bacteria"/>
</dbReference>
<dbReference type="HOGENOM" id="CLU_033449_0_2_9"/>
<dbReference type="UniPathway" id="UPA00940"/>
<dbReference type="Proteomes" id="UP000001823">
    <property type="component" value="Chromosome"/>
</dbReference>
<dbReference type="GO" id="GO:0005829">
    <property type="term" value="C:cytosol"/>
    <property type="evidence" value="ECO:0007669"/>
    <property type="project" value="TreeGrafter"/>
</dbReference>
<dbReference type="GO" id="GO:0047952">
    <property type="term" value="F:glycerol-3-phosphate dehydrogenase [NAD(P)+] activity"/>
    <property type="evidence" value="ECO:0007669"/>
    <property type="project" value="UniProtKB-UniRule"/>
</dbReference>
<dbReference type="GO" id="GO:0051287">
    <property type="term" value="F:NAD binding"/>
    <property type="evidence" value="ECO:0007669"/>
    <property type="project" value="InterPro"/>
</dbReference>
<dbReference type="GO" id="GO:0005975">
    <property type="term" value="P:carbohydrate metabolic process"/>
    <property type="evidence" value="ECO:0007669"/>
    <property type="project" value="InterPro"/>
</dbReference>
<dbReference type="GO" id="GO:0046167">
    <property type="term" value="P:glycerol-3-phosphate biosynthetic process"/>
    <property type="evidence" value="ECO:0007669"/>
    <property type="project" value="UniProtKB-UniRule"/>
</dbReference>
<dbReference type="GO" id="GO:0046168">
    <property type="term" value="P:glycerol-3-phosphate catabolic process"/>
    <property type="evidence" value="ECO:0007669"/>
    <property type="project" value="InterPro"/>
</dbReference>
<dbReference type="GO" id="GO:0006650">
    <property type="term" value="P:glycerophospholipid metabolic process"/>
    <property type="evidence" value="ECO:0007669"/>
    <property type="project" value="UniProtKB-UniRule"/>
</dbReference>
<dbReference type="GO" id="GO:0008654">
    <property type="term" value="P:phospholipid biosynthetic process"/>
    <property type="evidence" value="ECO:0007669"/>
    <property type="project" value="UniProtKB-KW"/>
</dbReference>
<dbReference type="FunFam" id="1.10.1040.10:FF:000001">
    <property type="entry name" value="Glycerol-3-phosphate dehydrogenase [NAD(P)+]"/>
    <property type="match status" value="1"/>
</dbReference>
<dbReference type="FunFam" id="3.40.50.720:FF:000019">
    <property type="entry name" value="Glycerol-3-phosphate dehydrogenase [NAD(P)+]"/>
    <property type="match status" value="1"/>
</dbReference>
<dbReference type="Gene3D" id="1.10.1040.10">
    <property type="entry name" value="N-(1-d-carboxylethyl)-l-norvaline Dehydrogenase, domain 2"/>
    <property type="match status" value="1"/>
</dbReference>
<dbReference type="Gene3D" id="3.40.50.720">
    <property type="entry name" value="NAD(P)-binding Rossmann-like Domain"/>
    <property type="match status" value="1"/>
</dbReference>
<dbReference type="HAMAP" id="MF_00394">
    <property type="entry name" value="NAD_Glyc3P_dehydrog"/>
    <property type="match status" value="1"/>
</dbReference>
<dbReference type="InterPro" id="IPR008927">
    <property type="entry name" value="6-PGluconate_DH-like_C_sf"/>
</dbReference>
<dbReference type="InterPro" id="IPR013328">
    <property type="entry name" value="6PGD_dom2"/>
</dbReference>
<dbReference type="InterPro" id="IPR006168">
    <property type="entry name" value="G3P_DH_NAD-dep"/>
</dbReference>
<dbReference type="InterPro" id="IPR006109">
    <property type="entry name" value="G3P_DH_NAD-dep_C"/>
</dbReference>
<dbReference type="InterPro" id="IPR011128">
    <property type="entry name" value="G3P_DH_NAD-dep_N"/>
</dbReference>
<dbReference type="InterPro" id="IPR036291">
    <property type="entry name" value="NAD(P)-bd_dom_sf"/>
</dbReference>
<dbReference type="NCBIfam" id="NF000940">
    <property type="entry name" value="PRK00094.1-2"/>
    <property type="match status" value="1"/>
</dbReference>
<dbReference type="NCBIfam" id="NF000941">
    <property type="entry name" value="PRK00094.1-3"/>
    <property type="match status" value="1"/>
</dbReference>
<dbReference type="NCBIfam" id="NF000942">
    <property type="entry name" value="PRK00094.1-4"/>
    <property type="match status" value="1"/>
</dbReference>
<dbReference type="PANTHER" id="PTHR11728">
    <property type="entry name" value="GLYCEROL-3-PHOSPHATE DEHYDROGENASE"/>
    <property type="match status" value="1"/>
</dbReference>
<dbReference type="PANTHER" id="PTHR11728:SF1">
    <property type="entry name" value="GLYCEROL-3-PHOSPHATE DEHYDROGENASE [NAD(+)] 2, CHLOROPLASTIC"/>
    <property type="match status" value="1"/>
</dbReference>
<dbReference type="Pfam" id="PF07479">
    <property type="entry name" value="NAD_Gly3P_dh_C"/>
    <property type="match status" value="1"/>
</dbReference>
<dbReference type="Pfam" id="PF01210">
    <property type="entry name" value="NAD_Gly3P_dh_N"/>
    <property type="match status" value="1"/>
</dbReference>
<dbReference type="PIRSF" id="PIRSF000114">
    <property type="entry name" value="Glycerol-3-P_dh"/>
    <property type="match status" value="1"/>
</dbReference>
<dbReference type="PRINTS" id="PR00077">
    <property type="entry name" value="GPDHDRGNASE"/>
</dbReference>
<dbReference type="SUPFAM" id="SSF48179">
    <property type="entry name" value="6-phosphogluconate dehydrogenase C-terminal domain-like"/>
    <property type="match status" value="1"/>
</dbReference>
<dbReference type="SUPFAM" id="SSF51735">
    <property type="entry name" value="NAD(P)-binding Rossmann-fold domains"/>
    <property type="match status" value="1"/>
</dbReference>
<dbReference type="PROSITE" id="PS00957">
    <property type="entry name" value="NAD_G3PDH"/>
    <property type="match status" value="1"/>
</dbReference>
<comment type="function">
    <text evidence="1">Catalyzes the reduction of the glycolytic intermediate dihydroxyacetone phosphate (DHAP) to sn-glycerol 3-phosphate (G3P), the key precursor for phospholipid synthesis.</text>
</comment>
<comment type="catalytic activity">
    <reaction evidence="1">
        <text>sn-glycerol 3-phosphate + NAD(+) = dihydroxyacetone phosphate + NADH + H(+)</text>
        <dbReference type="Rhea" id="RHEA:11092"/>
        <dbReference type="ChEBI" id="CHEBI:15378"/>
        <dbReference type="ChEBI" id="CHEBI:57540"/>
        <dbReference type="ChEBI" id="CHEBI:57597"/>
        <dbReference type="ChEBI" id="CHEBI:57642"/>
        <dbReference type="ChEBI" id="CHEBI:57945"/>
        <dbReference type="EC" id="1.1.1.94"/>
    </reaction>
    <physiologicalReaction direction="right-to-left" evidence="1">
        <dbReference type="Rhea" id="RHEA:11094"/>
    </physiologicalReaction>
</comment>
<comment type="catalytic activity">
    <reaction evidence="1">
        <text>sn-glycerol 3-phosphate + NADP(+) = dihydroxyacetone phosphate + NADPH + H(+)</text>
        <dbReference type="Rhea" id="RHEA:11096"/>
        <dbReference type="ChEBI" id="CHEBI:15378"/>
        <dbReference type="ChEBI" id="CHEBI:57597"/>
        <dbReference type="ChEBI" id="CHEBI:57642"/>
        <dbReference type="ChEBI" id="CHEBI:57783"/>
        <dbReference type="ChEBI" id="CHEBI:58349"/>
        <dbReference type="EC" id="1.1.1.94"/>
    </reaction>
    <physiologicalReaction direction="right-to-left" evidence="1">
        <dbReference type="Rhea" id="RHEA:11098"/>
    </physiologicalReaction>
</comment>
<comment type="pathway">
    <text evidence="1">Membrane lipid metabolism; glycerophospholipid metabolism.</text>
</comment>
<comment type="subcellular location">
    <subcellularLocation>
        <location evidence="1">Cytoplasm</location>
    </subcellularLocation>
</comment>
<comment type="similarity">
    <text evidence="1">Belongs to the NAD-dependent glycerol-3-phosphate dehydrogenase family.</text>
</comment>
<organism>
    <name type="scientific">Clostridium perfringens (strain ATCC 13124 / DSM 756 / JCM 1290 / NCIMB 6125 / NCTC 8237 / Type A)</name>
    <dbReference type="NCBI Taxonomy" id="195103"/>
    <lineage>
        <taxon>Bacteria</taxon>
        <taxon>Bacillati</taxon>
        <taxon>Bacillota</taxon>
        <taxon>Clostridia</taxon>
        <taxon>Eubacteriales</taxon>
        <taxon>Clostridiaceae</taxon>
        <taxon>Clostridium</taxon>
    </lineage>
</organism>
<name>GPDA_CLOP1</name>